<feature type="chain" id="PRO_1000204555" description="Large ribosomal subunit protein bL36">
    <location>
        <begin position="1"/>
        <end position="38"/>
    </location>
</feature>
<keyword id="KW-1185">Reference proteome</keyword>
<keyword id="KW-0687">Ribonucleoprotein</keyword>
<keyword id="KW-0689">Ribosomal protein</keyword>
<organism>
    <name type="scientific">Kosmotoga olearia (strain ATCC BAA-1733 / DSM 21960 / TBF 19.5.1)</name>
    <dbReference type="NCBI Taxonomy" id="521045"/>
    <lineage>
        <taxon>Bacteria</taxon>
        <taxon>Thermotogati</taxon>
        <taxon>Thermotogota</taxon>
        <taxon>Thermotogae</taxon>
        <taxon>Kosmotogales</taxon>
        <taxon>Kosmotogaceae</taxon>
        <taxon>Kosmotoga</taxon>
    </lineage>
</organism>
<sequence length="38" mass="4490">MKVRASVKKRCEHCKLIKRKGRVMVVCSKNPRHNQRQG</sequence>
<comment type="similarity">
    <text evidence="1">Belongs to the bacterial ribosomal protein bL36 family.</text>
</comment>
<protein>
    <recommendedName>
        <fullName evidence="1">Large ribosomal subunit protein bL36</fullName>
    </recommendedName>
    <alternativeName>
        <fullName evidence="2">50S ribosomal protein L36</fullName>
    </alternativeName>
</protein>
<gene>
    <name evidence="1" type="primary">rpmJ</name>
    <name type="ordered locus">Kole_1878</name>
</gene>
<reference key="1">
    <citation type="submission" date="2009-06" db="EMBL/GenBank/DDBJ databases">
        <title>Complete sequence of Thermotogales bacterium TBF 19.5.1.</title>
        <authorList>
            <consortium name="US DOE Joint Genome Institute"/>
            <person name="Lucas S."/>
            <person name="Copeland A."/>
            <person name="Lapidus A."/>
            <person name="Glavina del Rio T."/>
            <person name="Tice H."/>
            <person name="Bruce D."/>
            <person name="Goodwin L."/>
            <person name="Pitluck S."/>
            <person name="Chertkov O."/>
            <person name="Brettin T."/>
            <person name="Detter J.C."/>
            <person name="Han C."/>
            <person name="Schmutz J."/>
            <person name="Larimer F."/>
            <person name="Land M."/>
            <person name="Hauser L."/>
            <person name="Kyrpides N."/>
            <person name="Ovchinnikova G."/>
            <person name="Noll K."/>
        </authorList>
    </citation>
    <scope>NUCLEOTIDE SEQUENCE [LARGE SCALE GENOMIC DNA]</scope>
    <source>
        <strain>ATCC BAA-1733 / DSM 21960 / TBF 19.5.1</strain>
    </source>
</reference>
<proteinExistence type="inferred from homology"/>
<name>RL36_KOSOT</name>
<accession>C5CGH8</accession>
<evidence type="ECO:0000255" key="1">
    <source>
        <dbReference type="HAMAP-Rule" id="MF_00251"/>
    </source>
</evidence>
<evidence type="ECO:0000305" key="2"/>
<dbReference type="EMBL" id="CP001634">
    <property type="protein sequence ID" value="ACR80559.1"/>
    <property type="molecule type" value="Genomic_DNA"/>
</dbReference>
<dbReference type="RefSeq" id="WP_015869202.1">
    <property type="nucleotide sequence ID" value="NC_012785.1"/>
</dbReference>
<dbReference type="SMR" id="C5CGH8"/>
<dbReference type="STRING" id="521045.Kole_1878"/>
<dbReference type="KEGG" id="kol:Kole_1878"/>
<dbReference type="eggNOG" id="COG0257">
    <property type="taxonomic scope" value="Bacteria"/>
</dbReference>
<dbReference type="HOGENOM" id="CLU_135723_3_3_0"/>
<dbReference type="OrthoDB" id="9802520at2"/>
<dbReference type="Proteomes" id="UP000002382">
    <property type="component" value="Chromosome"/>
</dbReference>
<dbReference type="GO" id="GO:0005737">
    <property type="term" value="C:cytoplasm"/>
    <property type="evidence" value="ECO:0007669"/>
    <property type="project" value="UniProtKB-ARBA"/>
</dbReference>
<dbReference type="GO" id="GO:1990904">
    <property type="term" value="C:ribonucleoprotein complex"/>
    <property type="evidence" value="ECO:0007669"/>
    <property type="project" value="UniProtKB-KW"/>
</dbReference>
<dbReference type="GO" id="GO:0005840">
    <property type="term" value="C:ribosome"/>
    <property type="evidence" value="ECO:0007669"/>
    <property type="project" value="UniProtKB-KW"/>
</dbReference>
<dbReference type="GO" id="GO:0003735">
    <property type="term" value="F:structural constituent of ribosome"/>
    <property type="evidence" value="ECO:0007669"/>
    <property type="project" value="InterPro"/>
</dbReference>
<dbReference type="GO" id="GO:0006412">
    <property type="term" value="P:translation"/>
    <property type="evidence" value="ECO:0007669"/>
    <property type="project" value="UniProtKB-UniRule"/>
</dbReference>
<dbReference type="HAMAP" id="MF_00251">
    <property type="entry name" value="Ribosomal_bL36"/>
    <property type="match status" value="1"/>
</dbReference>
<dbReference type="InterPro" id="IPR000473">
    <property type="entry name" value="Ribosomal_bL36"/>
</dbReference>
<dbReference type="InterPro" id="IPR035977">
    <property type="entry name" value="Ribosomal_bL36_sp"/>
</dbReference>
<dbReference type="NCBIfam" id="TIGR01022">
    <property type="entry name" value="rpmJ_bact"/>
    <property type="match status" value="1"/>
</dbReference>
<dbReference type="PANTHER" id="PTHR42888">
    <property type="entry name" value="50S RIBOSOMAL PROTEIN L36, CHLOROPLASTIC"/>
    <property type="match status" value="1"/>
</dbReference>
<dbReference type="PANTHER" id="PTHR42888:SF1">
    <property type="entry name" value="LARGE RIBOSOMAL SUBUNIT PROTEIN BL36C"/>
    <property type="match status" value="1"/>
</dbReference>
<dbReference type="Pfam" id="PF00444">
    <property type="entry name" value="Ribosomal_L36"/>
    <property type="match status" value="1"/>
</dbReference>
<dbReference type="SUPFAM" id="SSF57840">
    <property type="entry name" value="Ribosomal protein L36"/>
    <property type="match status" value="1"/>
</dbReference>
<dbReference type="PROSITE" id="PS00828">
    <property type="entry name" value="RIBOSOMAL_L36"/>
    <property type="match status" value="1"/>
</dbReference>